<protein>
    <recommendedName>
        <fullName>Chaperone protein ClpB</fullName>
    </recommendedName>
</protein>
<reference key="1">
    <citation type="journal article" date="1998" name="Nature">
        <title>The complete genome of the hyperthermophilic bacterium Aquifex aeolicus.</title>
        <authorList>
            <person name="Deckert G."/>
            <person name="Warren P.V."/>
            <person name="Gaasterland T."/>
            <person name="Young W.G."/>
            <person name="Lenox A.L."/>
            <person name="Graham D.E."/>
            <person name="Overbeek R."/>
            <person name="Snead M.A."/>
            <person name="Keller M."/>
            <person name="Aujay M."/>
            <person name="Huber R."/>
            <person name="Feldman R.A."/>
            <person name="Short J.M."/>
            <person name="Olsen G.J."/>
            <person name="Swanson R.V."/>
        </authorList>
    </citation>
    <scope>NUCLEOTIDE SEQUENCE [LARGE SCALE GENOMIC DNA]</scope>
    <source>
        <strain>VF5</strain>
    </source>
</reference>
<keyword id="KW-0067">ATP-binding</keyword>
<keyword id="KW-0143">Chaperone</keyword>
<keyword id="KW-0175">Coiled coil</keyword>
<keyword id="KW-0963">Cytoplasm</keyword>
<keyword id="KW-0547">Nucleotide-binding</keyword>
<keyword id="KW-1185">Reference proteome</keyword>
<keyword id="KW-0677">Repeat</keyword>
<keyword id="KW-0346">Stress response</keyword>
<sequence>MISENLFSAKSLEYLEKAKEIARENKDTKVDTDHLLIALLLDEKSPLSKYIEKRGIDRKEFLKRVSEYLENLNKQLEKAIEAEAQNLINLRTQIMEVKSNIGNVQTELSKIRKAKERILRELEYARRYGDWWTAETLELELRQLEATEQSIRRQLEQVEKSLSTVFAPEDVKAFLENKLSIDGLIRKALEKSPLIEQVKELGISPDRIIDKVAEKVFGKKPTFDYSQYLTQVLEKAQDKAVSEGEAQVQPSHISAALIEAKDTIGGKLINQVLGGEKEMKKDVTQELKEEEKSPLERFGVNLNELARQGKLDPVIGREREINQVIEILLRRTKNNPVLVGDPGVGKTAIVEGLAQRIVNKEVPPELQDKEIWSIDMASLLAGSKYRGEFEERLKALLDEVKEKGNVILFIDEIHTVVGAGAAEGAVDAANIMKPALARGEIRVIGATTVDEYRKYIEKDPALERRFQPVFVDEPTEEQTIEILKGLRPRLEQFHKVKISDEAIEAAVKLTKRYVTFRRLPDKAIDALDQAAARKKLKVIGTPPEIQEIERKIKALEEQIIEANLKGDYEKEAQLKIEKAKLEKEKQELLGKVGGVEAKIAELKKKIEELDEKIKEAAEKGDYEKEAELKIEKAKLEKELKKLEQEKSKELVVTWDDVAEVVSEWTGIPVSRLKEEEMQKLLKLEDELHKRVVDQEHAVKAVAEAIRRARAGLKDPKRPIASFLFLGPTGVGKTELSKALAELLFGDEDALIRLDMSEFKEEHSVAKLIGAPPGYVGYEEGGKLTEAVRRKPYSVILLDEIEKAHPRVLDLFLQVLDDGRLTDSHGRTVDFRNTVIIMTSNIGSQYLLNIPVDADEETLNREFEKAKEKVLEELKLYMRPEFINRIDEIIVFKPLTMRELSKIIDLLIANVNKRLAERNIKIELTEEAKKELVRRGYDPAFGARPLKRTIQKYVETPLADKIIRGEIKDGMTVVVDYKDGEFVFIPKEEYEKQKAEVSASSEEKKES</sequence>
<proteinExistence type="inferred from homology"/>
<gene>
    <name type="primary">clpB</name>
    <name type="ordered locus">aq_1672</name>
</gene>
<name>CLPB_AQUAE</name>
<comment type="function">
    <text evidence="1">Part of a stress-induced multi-chaperone system, it is involved in the recovery of the cell from heat-induced damage, in cooperation with DnaK, DnaJ and GrpE. Acts before DnaK, in the processing of protein aggregates. Protein binding stimulates the ATPase activity; ATP hydrolysis unfolds the denatured protein aggregates, which probably helps expose new hydrophobic binding sites on the surface of ClpB-bound aggregates, contributing to the solubilization and refolding of denatured protein aggregates by DnaK (By similarity).</text>
</comment>
<comment type="subunit">
    <text evidence="1">Homohexamer. The oligomerization is ATP-dependent (By similarity).</text>
</comment>
<comment type="subcellular location">
    <subcellularLocation>
        <location evidence="4">Cytoplasm</location>
    </subcellularLocation>
</comment>
<comment type="domain">
    <text evidence="1">The Clp repeat (R) domain probably functions as a substrate-discriminating domain, recruiting aggregated proteins to the ClpB hexamer and/or stabilizing bound proteins. The NBD2 domain is responsible for oligomerization, whereas the NBD1 domain stabilizes the hexamer probably in an ATP-dependent manner. The movement of the coiled-coil domain is essential for ClpB ability to rescue proteins from an aggregated state, probably by pulling apart large aggregated proteins, which are bound between the coiled-coils motifs of adjacent ClpB subunits in the functional hexamer (By similarity).</text>
</comment>
<comment type="similarity">
    <text evidence="4">Belongs to the ClpA/ClpB family.</text>
</comment>
<feature type="chain" id="PRO_0000191087" description="Chaperone protein ClpB">
    <location>
        <begin position="1"/>
        <end position="1006"/>
    </location>
</feature>
<feature type="domain" description="Clp R" evidence="3">
    <location>
        <begin position="3"/>
        <end position="289"/>
    </location>
</feature>
<feature type="domain" description="UVR" evidence="2">
    <location>
        <begin position="603"/>
        <end position="638"/>
    </location>
</feature>
<feature type="region of interest" description="Repeat 1" evidence="3">
    <location>
        <begin position="7"/>
        <end position="72"/>
    </location>
</feature>
<feature type="region of interest" description="Repeat 2" evidence="3">
    <location>
        <begin position="225"/>
        <end position="289"/>
    </location>
</feature>
<feature type="region of interest" description="NBD1" evidence="1">
    <location>
        <begin position="251"/>
        <end position="473"/>
    </location>
</feature>
<feature type="region of interest" description="Linker" evidence="1">
    <location>
        <begin position="474"/>
        <end position="666"/>
    </location>
</feature>
<feature type="region of interest" description="NBD2" evidence="1">
    <location>
        <begin position="676"/>
        <end position="893"/>
    </location>
</feature>
<feature type="region of interest" description="C-terminal" evidence="1">
    <location>
        <begin position="894"/>
        <end position="1006"/>
    </location>
</feature>
<feature type="coiled-coil region" evidence="1">
    <location>
        <begin position="524"/>
        <end position="648"/>
    </location>
</feature>
<feature type="binding site" evidence="1">
    <location>
        <begin position="340"/>
        <end position="347"/>
    </location>
    <ligand>
        <name>ATP</name>
        <dbReference type="ChEBI" id="CHEBI:30616"/>
        <label>1</label>
    </ligand>
</feature>
<feature type="binding site" evidence="1">
    <location>
        <begin position="726"/>
        <end position="733"/>
    </location>
    <ligand>
        <name>ATP</name>
        <dbReference type="ChEBI" id="CHEBI:30616"/>
        <label>2</label>
    </ligand>
</feature>
<dbReference type="EMBL" id="AE000657">
    <property type="protein sequence ID" value="AAC07550.1"/>
    <property type="molecule type" value="Genomic_DNA"/>
</dbReference>
<dbReference type="PIR" id="C70445">
    <property type="entry name" value="C70445"/>
</dbReference>
<dbReference type="RefSeq" id="NP_214154.1">
    <property type="nucleotide sequence ID" value="NC_000918.1"/>
</dbReference>
<dbReference type="RefSeq" id="WP_010881091.1">
    <property type="nucleotide sequence ID" value="NC_000918.1"/>
</dbReference>
<dbReference type="SMR" id="O67588"/>
<dbReference type="STRING" id="224324.aq_1672"/>
<dbReference type="EnsemblBacteria" id="AAC07550">
    <property type="protein sequence ID" value="AAC07550"/>
    <property type="gene ID" value="aq_1672"/>
</dbReference>
<dbReference type="KEGG" id="aae:aq_1672"/>
<dbReference type="PATRIC" id="fig|224324.8.peg.1295"/>
<dbReference type="eggNOG" id="COG0542">
    <property type="taxonomic scope" value="Bacteria"/>
</dbReference>
<dbReference type="HOGENOM" id="CLU_005070_4_2_0"/>
<dbReference type="InParanoid" id="O67588"/>
<dbReference type="OrthoDB" id="9803641at2"/>
<dbReference type="Proteomes" id="UP000000798">
    <property type="component" value="Chromosome"/>
</dbReference>
<dbReference type="GO" id="GO:0005737">
    <property type="term" value="C:cytoplasm"/>
    <property type="evidence" value="ECO:0000318"/>
    <property type="project" value="GO_Central"/>
</dbReference>
<dbReference type="GO" id="GO:0005524">
    <property type="term" value="F:ATP binding"/>
    <property type="evidence" value="ECO:0007669"/>
    <property type="project" value="UniProtKB-KW"/>
</dbReference>
<dbReference type="GO" id="GO:0016887">
    <property type="term" value="F:ATP hydrolysis activity"/>
    <property type="evidence" value="ECO:0000318"/>
    <property type="project" value="GO_Central"/>
</dbReference>
<dbReference type="GO" id="GO:0034605">
    <property type="term" value="P:cellular response to heat"/>
    <property type="evidence" value="ECO:0000318"/>
    <property type="project" value="GO_Central"/>
</dbReference>
<dbReference type="CDD" id="cd00009">
    <property type="entry name" value="AAA"/>
    <property type="match status" value="1"/>
</dbReference>
<dbReference type="CDD" id="cd19499">
    <property type="entry name" value="RecA-like_ClpB_Hsp104-like"/>
    <property type="match status" value="1"/>
</dbReference>
<dbReference type="FunFam" id="1.10.8.60:FF:000017">
    <property type="entry name" value="ATP-dependent chaperone ClpB"/>
    <property type="match status" value="1"/>
</dbReference>
<dbReference type="FunFam" id="3.40.50.300:FF:000025">
    <property type="entry name" value="ATP-dependent Clp protease subunit"/>
    <property type="match status" value="1"/>
</dbReference>
<dbReference type="FunFam" id="3.40.50.300:FF:000010">
    <property type="entry name" value="Chaperone clpB 1, putative"/>
    <property type="match status" value="1"/>
</dbReference>
<dbReference type="Gene3D" id="1.10.8.60">
    <property type="match status" value="1"/>
</dbReference>
<dbReference type="Gene3D" id="1.10.1780.10">
    <property type="entry name" value="Clp, N-terminal domain"/>
    <property type="match status" value="2"/>
</dbReference>
<dbReference type="Gene3D" id="3.40.50.300">
    <property type="entry name" value="P-loop containing nucleotide triphosphate hydrolases"/>
    <property type="match status" value="3"/>
</dbReference>
<dbReference type="InterPro" id="IPR003593">
    <property type="entry name" value="AAA+_ATPase"/>
</dbReference>
<dbReference type="InterPro" id="IPR003959">
    <property type="entry name" value="ATPase_AAA_core"/>
</dbReference>
<dbReference type="InterPro" id="IPR019489">
    <property type="entry name" value="Clp_ATPase_C"/>
</dbReference>
<dbReference type="InterPro" id="IPR036628">
    <property type="entry name" value="Clp_N_dom_sf"/>
</dbReference>
<dbReference type="InterPro" id="IPR004176">
    <property type="entry name" value="Clp_R_dom"/>
</dbReference>
<dbReference type="InterPro" id="IPR001270">
    <property type="entry name" value="ClpA/B"/>
</dbReference>
<dbReference type="InterPro" id="IPR018368">
    <property type="entry name" value="ClpA/B_CS1"/>
</dbReference>
<dbReference type="InterPro" id="IPR028299">
    <property type="entry name" value="ClpA/B_CS2"/>
</dbReference>
<dbReference type="InterPro" id="IPR041546">
    <property type="entry name" value="ClpA/ClpB_AAA_lid"/>
</dbReference>
<dbReference type="InterPro" id="IPR050130">
    <property type="entry name" value="ClpA_ClpB"/>
</dbReference>
<dbReference type="InterPro" id="IPR027417">
    <property type="entry name" value="P-loop_NTPase"/>
</dbReference>
<dbReference type="InterPro" id="IPR001943">
    <property type="entry name" value="UVR_dom"/>
</dbReference>
<dbReference type="PANTHER" id="PTHR11638">
    <property type="entry name" value="ATP-DEPENDENT CLP PROTEASE"/>
    <property type="match status" value="1"/>
</dbReference>
<dbReference type="PANTHER" id="PTHR11638:SF18">
    <property type="entry name" value="HEAT SHOCK PROTEIN 104"/>
    <property type="match status" value="1"/>
</dbReference>
<dbReference type="Pfam" id="PF00004">
    <property type="entry name" value="AAA"/>
    <property type="match status" value="1"/>
</dbReference>
<dbReference type="Pfam" id="PF07724">
    <property type="entry name" value="AAA_2"/>
    <property type="match status" value="1"/>
</dbReference>
<dbReference type="Pfam" id="PF17871">
    <property type="entry name" value="AAA_lid_9"/>
    <property type="match status" value="1"/>
</dbReference>
<dbReference type="Pfam" id="PF02861">
    <property type="entry name" value="Clp_N"/>
    <property type="match status" value="2"/>
</dbReference>
<dbReference type="Pfam" id="PF10431">
    <property type="entry name" value="ClpB_D2-small"/>
    <property type="match status" value="1"/>
</dbReference>
<dbReference type="PRINTS" id="PR00300">
    <property type="entry name" value="CLPPROTEASEA"/>
</dbReference>
<dbReference type="SMART" id="SM00382">
    <property type="entry name" value="AAA"/>
    <property type="match status" value="2"/>
</dbReference>
<dbReference type="SMART" id="SM01086">
    <property type="entry name" value="ClpB_D2-small"/>
    <property type="match status" value="1"/>
</dbReference>
<dbReference type="SUPFAM" id="SSF81923">
    <property type="entry name" value="Double Clp-N motif"/>
    <property type="match status" value="1"/>
</dbReference>
<dbReference type="SUPFAM" id="SSF52540">
    <property type="entry name" value="P-loop containing nucleoside triphosphate hydrolases"/>
    <property type="match status" value="2"/>
</dbReference>
<dbReference type="PROSITE" id="PS51903">
    <property type="entry name" value="CLP_R"/>
    <property type="match status" value="1"/>
</dbReference>
<dbReference type="PROSITE" id="PS00870">
    <property type="entry name" value="CLPAB_1"/>
    <property type="match status" value="1"/>
</dbReference>
<dbReference type="PROSITE" id="PS00871">
    <property type="entry name" value="CLPAB_2"/>
    <property type="match status" value="1"/>
</dbReference>
<dbReference type="PROSITE" id="PS50151">
    <property type="entry name" value="UVR"/>
    <property type="match status" value="1"/>
</dbReference>
<accession>O67588</accession>
<evidence type="ECO:0000250" key="1"/>
<evidence type="ECO:0000255" key="2">
    <source>
        <dbReference type="PROSITE-ProRule" id="PRU00217"/>
    </source>
</evidence>
<evidence type="ECO:0000255" key="3">
    <source>
        <dbReference type="PROSITE-ProRule" id="PRU01251"/>
    </source>
</evidence>
<evidence type="ECO:0000305" key="4"/>
<organism>
    <name type="scientific">Aquifex aeolicus (strain VF5)</name>
    <dbReference type="NCBI Taxonomy" id="224324"/>
    <lineage>
        <taxon>Bacteria</taxon>
        <taxon>Pseudomonadati</taxon>
        <taxon>Aquificota</taxon>
        <taxon>Aquificia</taxon>
        <taxon>Aquificales</taxon>
        <taxon>Aquificaceae</taxon>
        <taxon>Aquifex</taxon>
    </lineage>
</organism>